<protein>
    <recommendedName>
        <fullName>Myoblast determination protein 1</fullName>
    </recommendedName>
</protein>
<feature type="chain" id="PRO_0000247561" description="Myoblast determination protein 1">
    <location>
        <begin position="1"/>
        <end position="318"/>
    </location>
</feature>
<feature type="domain" description="bHLH" evidence="5">
    <location>
        <begin position="109"/>
        <end position="160"/>
    </location>
</feature>
<feature type="region of interest" description="Disordered" evidence="6">
    <location>
        <begin position="174"/>
        <end position="224"/>
    </location>
</feature>
<feature type="region of interest" description="Disordered" evidence="6">
    <location>
        <begin position="266"/>
        <end position="318"/>
    </location>
</feature>
<feature type="compositionally biased region" description="Polar residues" evidence="6">
    <location>
        <begin position="197"/>
        <end position="207"/>
    </location>
</feature>
<feature type="compositionally biased region" description="Low complexity" evidence="6">
    <location>
        <begin position="266"/>
        <end position="276"/>
    </location>
</feature>
<feature type="modified residue" description="N6-methyllysine; by EHMT2" evidence="3">
    <location>
        <position position="104"/>
    </location>
</feature>
<feature type="cross-link" description="Peptide (Met-Gly) (interchain with G-Cter in ubiquitin)" evidence="1">
    <location>
        <position position="1"/>
    </location>
</feature>
<comment type="function">
    <text evidence="1">Acts as a transcriptional activator that promotes transcription of muscle-specific target genes and plays a role in muscle differentiation. Together with MYF5 and MYOG, co-occupies muscle-specific gene promoter core region during myogenesis. Induces fibroblasts to differentiate into myoblasts. Interacts with and is inhibited by the twist protein. This interaction probably involves the basic domains of both proteins (By similarity).</text>
</comment>
<comment type="subunit">
    <text evidence="2 4">Efficient DNA binding requires dimerization with another bHLH protein. Seems to form active heterodimers with ITF-2. Interacts with SUV39H1. Interacts with DDX5. Interacts with CHD2. Interacts with TSC22D3 (By similarity). Interacts with SETD3 (By similarity). Interacts with P-TEFB complex; promotes the transcriptional activity of MYOD1 through its CDK9-mediated phosphorylation (By similarity). Interacts with CSRP3 (By similarity). Interacts with NUPR1 (By similarity).</text>
</comment>
<comment type="subcellular location">
    <subcellularLocation>
        <location evidence="5">Nucleus</location>
    </subcellularLocation>
</comment>
<comment type="PTM">
    <text evidence="1">Phosphorylated by CDK9. This phosphorylation promotes its function in muscle differentiation (By similarity).</text>
</comment>
<comment type="PTM">
    <text evidence="1">Acetylated by a complex containing EP300 and PCAF. The acetylation is essential to activate target genes. Conversely, its deacetylation by SIRT1 inhibits its function (By similarity).</text>
</comment>
<comment type="PTM">
    <text evidence="1">Ubiquitinated on the N-terminus; which is required for proteasomal degradation.</text>
</comment>
<comment type="PTM">
    <text evidence="1">Methylation at Lys-104 by EHMT2/G9a inhibits myogenic activity.</text>
</comment>
<name>MYOD1_BOVIN</name>
<sequence>MEVLSPPLRDVDLTGPDGSLCNFATADDFYDDPCFDSPDLRFFEDLDPRLVHVGALLKPEEHSHFPAAAHPAPGAREDEHVRAPSGHHQAGRCLLWACKACKRKTTNADRRKAATMRERRRLSKVNEAFETLKRCTSSNPNQRLPKVEILRNAIRYIEGLQALLRDQDAAPPGAAAAFYAPGPLPPGRSGEHYSGDSDASSPRSNCSDGMMDYSGPPSGARRRNCYDRTYYSEAPNEPRPGKSAAVSSLDCLSSIVERISTESPAAPALLLADAPPESSPGPQEAAGSEVERGTPAPSPDTAPQGLAGANPNPIYQVL</sequence>
<dbReference type="EMBL" id="AB110599">
    <property type="protein sequence ID" value="BAC76802.1"/>
    <property type="molecule type" value="mRNA"/>
</dbReference>
<dbReference type="SMR" id="Q7YS82"/>
<dbReference type="FunCoup" id="Q7YS82">
    <property type="interactions" value="54"/>
</dbReference>
<dbReference type="STRING" id="9913.ENSBTAP00000002868"/>
<dbReference type="PaxDb" id="9913-ENSBTAP00000002868"/>
<dbReference type="eggNOG" id="KOG3960">
    <property type="taxonomic scope" value="Eukaryota"/>
</dbReference>
<dbReference type="InParanoid" id="Q7YS82"/>
<dbReference type="OrthoDB" id="10049614at2759"/>
<dbReference type="Proteomes" id="UP000009136">
    <property type="component" value="Unplaced"/>
</dbReference>
<dbReference type="GO" id="GO:0005634">
    <property type="term" value="C:nucleus"/>
    <property type="evidence" value="ECO:0000250"/>
    <property type="project" value="UniProtKB"/>
</dbReference>
<dbReference type="GO" id="GO:0005667">
    <property type="term" value="C:transcription regulator complex"/>
    <property type="evidence" value="ECO:0000250"/>
    <property type="project" value="AgBase"/>
</dbReference>
<dbReference type="GO" id="GO:0043425">
    <property type="term" value="F:bHLH transcription factor binding"/>
    <property type="evidence" value="ECO:0000250"/>
    <property type="project" value="AgBase"/>
</dbReference>
<dbReference type="GO" id="GO:0003682">
    <property type="term" value="F:chromatin binding"/>
    <property type="evidence" value="ECO:0000250"/>
    <property type="project" value="UniProtKB"/>
</dbReference>
<dbReference type="GO" id="GO:0001216">
    <property type="term" value="F:DNA-binding transcription activator activity"/>
    <property type="evidence" value="ECO:0000250"/>
    <property type="project" value="UniProtKB"/>
</dbReference>
<dbReference type="GO" id="GO:0003700">
    <property type="term" value="F:DNA-binding transcription factor activity"/>
    <property type="evidence" value="ECO:0000250"/>
    <property type="project" value="AgBase"/>
</dbReference>
<dbReference type="GO" id="GO:0000981">
    <property type="term" value="F:DNA-binding transcription factor activity, RNA polymerase II-specific"/>
    <property type="evidence" value="ECO:0000318"/>
    <property type="project" value="GO_Central"/>
</dbReference>
<dbReference type="GO" id="GO:0070888">
    <property type="term" value="F:E-box binding"/>
    <property type="evidence" value="ECO:0000250"/>
    <property type="project" value="UniProtKB"/>
</dbReference>
<dbReference type="GO" id="GO:1990841">
    <property type="term" value="F:promoter-specific chromatin binding"/>
    <property type="evidence" value="ECO:0000250"/>
    <property type="project" value="UniProtKB"/>
</dbReference>
<dbReference type="GO" id="GO:0046983">
    <property type="term" value="F:protein dimerization activity"/>
    <property type="evidence" value="ECO:0007669"/>
    <property type="project" value="InterPro"/>
</dbReference>
<dbReference type="GO" id="GO:0000978">
    <property type="term" value="F:RNA polymerase II cis-regulatory region sequence-specific DNA binding"/>
    <property type="evidence" value="ECO:0000318"/>
    <property type="project" value="GO_Central"/>
</dbReference>
<dbReference type="GO" id="GO:0071392">
    <property type="term" value="P:cellular response to estradiol stimulus"/>
    <property type="evidence" value="ECO:0000250"/>
    <property type="project" value="UniProtKB"/>
</dbReference>
<dbReference type="GO" id="GO:0007517">
    <property type="term" value="P:muscle organ development"/>
    <property type="evidence" value="ECO:0000250"/>
    <property type="project" value="AgBase"/>
</dbReference>
<dbReference type="GO" id="GO:0045445">
    <property type="term" value="P:myoblast differentiation"/>
    <property type="evidence" value="ECO:0000250"/>
    <property type="project" value="UniProtKB"/>
</dbReference>
<dbReference type="GO" id="GO:0007518">
    <property type="term" value="P:myoblast fate determination"/>
    <property type="evidence" value="ECO:0000250"/>
    <property type="project" value="UniProtKB"/>
</dbReference>
<dbReference type="GO" id="GO:0051149">
    <property type="term" value="P:positive regulation of muscle cell differentiation"/>
    <property type="evidence" value="ECO:0000250"/>
    <property type="project" value="UniProtKB"/>
</dbReference>
<dbReference type="GO" id="GO:0045663">
    <property type="term" value="P:positive regulation of myoblast differentiation"/>
    <property type="evidence" value="ECO:0000318"/>
    <property type="project" value="GO_Central"/>
</dbReference>
<dbReference type="GO" id="GO:0048743">
    <property type="term" value="P:positive regulation of skeletal muscle fiber development"/>
    <property type="evidence" value="ECO:0000318"/>
    <property type="project" value="GO_Central"/>
</dbReference>
<dbReference type="GO" id="GO:0043415">
    <property type="term" value="P:positive regulation of skeletal muscle tissue regeneration"/>
    <property type="evidence" value="ECO:0000250"/>
    <property type="project" value="UniProtKB"/>
</dbReference>
<dbReference type="GO" id="GO:1905382">
    <property type="term" value="P:positive regulation of snRNA transcription by RNA polymerase II"/>
    <property type="evidence" value="ECO:0000250"/>
    <property type="project" value="UniProtKB"/>
</dbReference>
<dbReference type="GO" id="GO:0045944">
    <property type="term" value="P:positive regulation of transcription by RNA polymerase II"/>
    <property type="evidence" value="ECO:0000250"/>
    <property type="project" value="UniProtKB"/>
</dbReference>
<dbReference type="GO" id="GO:0000381">
    <property type="term" value="P:regulation of alternative mRNA splicing, via spliceosome"/>
    <property type="evidence" value="ECO:0000250"/>
    <property type="project" value="UniProtKB"/>
</dbReference>
<dbReference type="GO" id="GO:0006355">
    <property type="term" value="P:regulation of DNA-templated transcription"/>
    <property type="evidence" value="ECO:0000250"/>
    <property type="project" value="AgBase"/>
</dbReference>
<dbReference type="GO" id="GO:0006357">
    <property type="term" value="P:regulation of transcription by RNA polymerase II"/>
    <property type="evidence" value="ECO:0000318"/>
    <property type="project" value="GO_Central"/>
</dbReference>
<dbReference type="GO" id="GO:0035914">
    <property type="term" value="P:skeletal muscle cell differentiation"/>
    <property type="evidence" value="ECO:0000318"/>
    <property type="project" value="GO_Central"/>
</dbReference>
<dbReference type="GO" id="GO:0007519">
    <property type="term" value="P:skeletal muscle tissue development"/>
    <property type="evidence" value="ECO:0000250"/>
    <property type="project" value="UniProtKB"/>
</dbReference>
<dbReference type="GO" id="GO:0051146">
    <property type="term" value="P:striated muscle cell differentiation"/>
    <property type="evidence" value="ECO:0000250"/>
    <property type="project" value="UniProtKB"/>
</dbReference>
<dbReference type="CDD" id="cd18936">
    <property type="entry name" value="bHLH_TS_MYOD1_Myf3"/>
    <property type="match status" value="1"/>
</dbReference>
<dbReference type="FunFam" id="4.10.280.10:FF:000005">
    <property type="entry name" value="Myogenic factor"/>
    <property type="match status" value="1"/>
</dbReference>
<dbReference type="Gene3D" id="4.10.280.10">
    <property type="entry name" value="Helix-loop-helix DNA-binding domain"/>
    <property type="match status" value="1"/>
</dbReference>
<dbReference type="InterPro" id="IPR011598">
    <property type="entry name" value="bHLH_dom"/>
</dbReference>
<dbReference type="InterPro" id="IPR036638">
    <property type="entry name" value="HLH_DNA-bd_sf"/>
</dbReference>
<dbReference type="InterPro" id="IPR022032">
    <property type="entry name" value="Myf5"/>
</dbReference>
<dbReference type="InterPro" id="IPR002546">
    <property type="entry name" value="MyoD_N"/>
</dbReference>
<dbReference type="InterPro" id="IPR039704">
    <property type="entry name" value="Myogenic_factor"/>
</dbReference>
<dbReference type="PANTHER" id="PTHR11534:SF2">
    <property type="entry name" value="MYOBLAST DETERMINATION PROTEIN 1"/>
    <property type="match status" value="1"/>
</dbReference>
<dbReference type="PANTHER" id="PTHR11534">
    <property type="entry name" value="MYOGENIC FACTOR"/>
    <property type="match status" value="1"/>
</dbReference>
<dbReference type="Pfam" id="PF01586">
    <property type="entry name" value="Basic"/>
    <property type="match status" value="1"/>
</dbReference>
<dbReference type="Pfam" id="PF00010">
    <property type="entry name" value="HLH"/>
    <property type="match status" value="1"/>
</dbReference>
<dbReference type="Pfam" id="PF12232">
    <property type="entry name" value="Myf5"/>
    <property type="match status" value="1"/>
</dbReference>
<dbReference type="SMART" id="SM00520">
    <property type="entry name" value="BASIC"/>
    <property type="match status" value="1"/>
</dbReference>
<dbReference type="SMART" id="SM00353">
    <property type="entry name" value="HLH"/>
    <property type="match status" value="1"/>
</dbReference>
<dbReference type="SUPFAM" id="SSF47459">
    <property type="entry name" value="HLH, helix-loop-helix DNA-binding domain"/>
    <property type="match status" value="1"/>
</dbReference>
<dbReference type="PROSITE" id="PS50888">
    <property type="entry name" value="BHLH"/>
    <property type="match status" value="1"/>
</dbReference>
<organism>
    <name type="scientific">Bos taurus</name>
    <name type="common">Bovine</name>
    <dbReference type="NCBI Taxonomy" id="9913"/>
    <lineage>
        <taxon>Eukaryota</taxon>
        <taxon>Metazoa</taxon>
        <taxon>Chordata</taxon>
        <taxon>Craniata</taxon>
        <taxon>Vertebrata</taxon>
        <taxon>Euteleostomi</taxon>
        <taxon>Mammalia</taxon>
        <taxon>Eutheria</taxon>
        <taxon>Laurasiatheria</taxon>
        <taxon>Artiodactyla</taxon>
        <taxon>Ruminantia</taxon>
        <taxon>Pecora</taxon>
        <taxon>Bovidae</taxon>
        <taxon>Bovinae</taxon>
        <taxon>Bos</taxon>
    </lineage>
</organism>
<keyword id="KW-0007">Acetylation</keyword>
<keyword id="KW-0010">Activator</keyword>
<keyword id="KW-0217">Developmental protein</keyword>
<keyword id="KW-0221">Differentiation</keyword>
<keyword id="KW-0238">DNA-binding</keyword>
<keyword id="KW-0488">Methylation</keyword>
<keyword id="KW-0517">Myogenesis</keyword>
<keyword id="KW-0539">Nucleus</keyword>
<keyword id="KW-0597">Phosphoprotein</keyword>
<keyword id="KW-1185">Reference proteome</keyword>
<keyword id="KW-0804">Transcription</keyword>
<keyword id="KW-0805">Transcription regulation</keyword>
<keyword id="KW-0832">Ubl conjugation</keyword>
<proteinExistence type="evidence at transcript level"/>
<gene>
    <name type="primary">MYOD1</name>
    <name type="synonym">MYOD</name>
</gene>
<accession>Q7YS82</accession>
<evidence type="ECO:0000250" key="1"/>
<evidence type="ECO:0000250" key="2">
    <source>
        <dbReference type="UniProtKB" id="P10085"/>
    </source>
</evidence>
<evidence type="ECO:0000250" key="3">
    <source>
        <dbReference type="UniProtKB" id="P15172"/>
    </source>
</evidence>
<evidence type="ECO:0000250" key="4">
    <source>
        <dbReference type="UniProtKB" id="Q02346"/>
    </source>
</evidence>
<evidence type="ECO:0000255" key="5">
    <source>
        <dbReference type="PROSITE-ProRule" id="PRU00981"/>
    </source>
</evidence>
<evidence type="ECO:0000256" key="6">
    <source>
        <dbReference type="SAM" id="MobiDB-lite"/>
    </source>
</evidence>
<reference key="1">
    <citation type="submission" date="2003-05" db="EMBL/GenBank/DDBJ databases">
        <title>Effect of myogenic regulatory factor siRNAs on differentiation of bovine skeletal muscle cells.</title>
        <authorList>
            <person name="Muroya S."/>
            <person name="Nakajima I."/>
            <person name="Chikuni K."/>
        </authorList>
    </citation>
    <scope>NUCLEOTIDE SEQUENCE [MRNA]</scope>
    <source>
        <tissue>Skeletal muscle</tissue>
    </source>
</reference>